<reference key="1">
    <citation type="submission" date="2007-06" db="EMBL/GenBank/DDBJ databases">
        <title>Complete sequence of Clostridium beijerinckii NCIMB 8052.</title>
        <authorList>
            <consortium name="US DOE Joint Genome Institute"/>
            <person name="Copeland A."/>
            <person name="Lucas S."/>
            <person name="Lapidus A."/>
            <person name="Barry K."/>
            <person name="Detter J.C."/>
            <person name="Glavina del Rio T."/>
            <person name="Hammon N."/>
            <person name="Israni S."/>
            <person name="Dalin E."/>
            <person name="Tice H."/>
            <person name="Pitluck S."/>
            <person name="Sims D."/>
            <person name="Brettin T."/>
            <person name="Bruce D."/>
            <person name="Tapia R."/>
            <person name="Brainard J."/>
            <person name="Schmutz J."/>
            <person name="Larimer F."/>
            <person name="Land M."/>
            <person name="Hauser L."/>
            <person name="Kyrpides N."/>
            <person name="Mikhailova N."/>
            <person name="Bennet G."/>
            <person name="Cann I."/>
            <person name="Chen J.-S."/>
            <person name="Contreras A.L."/>
            <person name="Jones D."/>
            <person name="Kashket E."/>
            <person name="Mitchell W."/>
            <person name="Stoddard S."/>
            <person name="Schwarz W."/>
            <person name="Qureshi N."/>
            <person name="Young M."/>
            <person name="Shi Z."/>
            <person name="Ezeji T."/>
            <person name="White B."/>
            <person name="Blaschek H."/>
            <person name="Richardson P."/>
        </authorList>
    </citation>
    <scope>NUCLEOTIDE SEQUENCE [LARGE SCALE GENOMIC DNA]</scope>
    <source>
        <strain>ATCC 51743 / NCIMB 8052</strain>
    </source>
</reference>
<gene>
    <name evidence="1" type="primary">nagB</name>
    <name type="ordered locus">Cbei_4562</name>
</gene>
<sequence length="242" mass="26917">MKLLVVKDYEEMSEVAAKIFKEVISEKTNAVLGLATGSTPEGLYKKIIEMNRNKEIDFSNIKTVNLDEYVGLGGEDPQSYRYFMNEKLFNHVNINKANTFVPNGLAKDLDEEAKNYDKKVDELGGIDIQILGIGANGHIAFNEPDDFLIAETHVTGLTKTTIEANSRFFKSIEEVPTKALSMGLGQIMKARKIVLLVRGQDKAEAIKGLFKGNITTHNPATMLHMHKDVTVIIDEEMANAIK</sequence>
<dbReference type="EC" id="3.5.99.6" evidence="1"/>
<dbReference type="EMBL" id="CP000721">
    <property type="protein sequence ID" value="ABR36671.1"/>
    <property type="molecule type" value="Genomic_DNA"/>
</dbReference>
<dbReference type="RefSeq" id="WP_012060718.1">
    <property type="nucleotide sequence ID" value="NC_009617.1"/>
</dbReference>
<dbReference type="SMR" id="A6M241"/>
<dbReference type="KEGG" id="cbe:Cbei_4562"/>
<dbReference type="eggNOG" id="COG0363">
    <property type="taxonomic scope" value="Bacteria"/>
</dbReference>
<dbReference type="HOGENOM" id="CLU_049611_1_1_9"/>
<dbReference type="UniPathway" id="UPA00629">
    <property type="reaction ID" value="UER00684"/>
</dbReference>
<dbReference type="Proteomes" id="UP000000565">
    <property type="component" value="Chromosome"/>
</dbReference>
<dbReference type="GO" id="GO:0005737">
    <property type="term" value="C:cytoplasm"/>
    <property type="evidence" value="ECO:0007669"/>
    <property type="project" value="TreeGrafter"/>
</dbReference>
<dbReference type="GO" id="GO:0004342">
    <property type="term" value="F:glucosamine-6-phosphate deaminase activity"/>
    <property type="evidence" value="ECO:0007669"/>
    <property type="project" value="UniProtKB-UniRule"/>
</dbReference>
<dbReference type="GO" id="GO:0042802">
    <property type="term" value="F:identical protein binding"/>
    <property type="evidence" value="ECO:0007669"/>
    <property type="project" value="TreeGrafter"/>
</dbReference>
<dbReference type="GO" id="GO:0005975">
    <property type="term" value="P:carbohydrate metabolic process"/>
    <property type="evidence" value="ECO:0007669"/>
    <property type="project" value="InterPro"/>
</dbReference>
<dbReference type="GO" id="GO:0006043">
    <property type="term" value="P:glucosamine catabolic process"/>
    <property type="evidence" value="ECO:0007669"/>
    <property type="project" value="TreeGrafter"/>
</dbReference>
<dbReference type="GO" id="GO:0006046">
    <property type="term" value="P:N-acetylglucosamine catabolic process"/>
    <property type="evidence" value="ECO:0007669"/>
    <property type="project" value="TreeGrafter"/>
</dbReference>
<dbReference type="GO" id="GO:0019262">
    <property type="term" value="P:N-acetylneuraminate catabolic process"/>
    <property type="evidence" value="ECO:0007669"/>
    <property type="project" value="UniProtKB-UniRule"/>
</dbReference>
<dbReference type="CDD" id="cd01399">
    <property type="entry name" value="GlcN6P_deaminase"/>
    <property type="match status" value="1"/>
</dbReference>
<dbReference type="FunFam" id="3.40.50.1360:FF:000003">
    <property type="entry name" value="Glucosamine-6-phosphate deaminase"/>
    <property type="match status" value="1"/>
</dbReference>
<dbReference type="Gene3D" id="3.40.50.1360">
    <property type="match status" value="1"/>
</dbReference>
<dbReference type="HAMAP" id="MF_01241">
    <property type="entry name" value="GlcN6P_deamin"/>
    <property type="match status" value="1"/>
</dbReference>
<dbReference type="InterPro" id="IPR006148">
    <property type="entry name" value="Glc/Gal-6P_isomerase"/>
</dbReference>
<dbReference type="InterPro" id="IPR004547">
    <property type="entry name" value="Glucosamine6P_isomerase"/>
</dbReference>
<dbReference type="InterPro" id="IPR018321">
    <property type="entry name" value="Glucosamine6P_isomerase_CS"/>
</dbReference>
<dbReference type="InterPro" id="IPR037171">
    <property type="entry name" value="NagB/RpiA_transferase-like"/>
</dbReference>
<dbReference type="NCBIfam" id="TIGR00502">
    <property type="entry name" value="nagB"/>
    <property type="match status" value="1"/>
</dbReference>
<dbReference type="PANTHER" id="PTHR11280">
    <property type="entry name" value="GLUCOSAMINE-6-PHOSPHATE ISOMERASE"/>
    <property type="match status" value="1"/>
</dbReference>
<dbReference type="PANTHER" id="PTHR11280:SF5">
    <property type="entry name" value="GLUCOSAMINE-6-PHOSPHATE ISOMERASE"/>
    <property type="match status" value="1"/>
</dbReference>
<dbReference type="Pfam" id="PF01182">
    <property type="entry name" value="Glucosamine_iso"/>
    <property type="match status" value="1"/>
</dbReference>
<dbReference type="SUPFAM" id="SSF100950">
    <property type="entry name" value="NagB/RpiA/CoA transferase-like"/>
    <property type="match status" value="1"/>
</dbReference>
<dbReference type="PROSITE" id="PS01161">
    <property type="entry name" value="GLC_GALNAC_ISOMERASE"/>
    <property type="match status" value="1"/>
</dbReference>
<name>NAGB_CLOB8</name>
<feature type="chain" id="PRO_1000085747" description="Glucosamine-6-phosphate deaminase">
    <location>
        <begin position="1"/>
        <end position="242"/>
    </location>
</feature>
<feature type="active site" description="Proton acceptor; for enolization step" evidence="1">
    <location>
        <position position="67"/>
    </location>
</feature>
<feature type="active site" description="For ring-opening step" evidence="1">
    <location>
        <position position="136"/>
    </location>
</feature>
<feature type="active site" description="Proton acceptor; for ring-opening step" evidence="1">
    <location>
        <position position="138"/>
    </location>
</feature>
<feature type="active site" description="For ring-opening step" evidence="1">
    <location>
        <position position="143"/>
    </location>
</feature>
<organism>
    <name type="scientific">Clostridium beijerinckii (strain ATCC 51743 / NCIMB 8052)</name>
    <name type="common">Clostridium acetobutylicum</name>
    <dbReference type="NCBI Taxonomy" id="290402"/>
    <lineage>
        <taxon>Bacteria</taxon>
        <taxon>Bacillati</taxon>
        <taxon>Bacillota</taxon>
        <taxon>Clostridia</taxon>
        <taxon>Eubacteriales</taxon>
        <taxon>Clostridiaceae</taxon>
        <taxon>Clostridium</taxon>
    </lineage>
</organism>
<comment type="function">
    <text evidence="1">Catalyzes the reversible isomerization-deamination of glucosamine 6-phosphate (GlcN6P) to form fructose 6-phosphate (Fru6P) and ammonium ion.</text>
</comment>
<comment type="catalytic activity">
    <reaction evidence="1">
        <text>alpha-D-glucosamine 6-phosphate + H2O = beta-D-fructose 6-phosphate + NH4(+)</text>
        <dbReference type="Rhea" id="RHEA:12172"/>
        <dbReference type="ChEBI" id="CHEBI:15377"/>
        <dbReference type="ChEBI" id="CHEBI:28938"/>
        <dbReference type="ChEBI" id="CHEBI:57634"/>
        <dbReference type="ChEBI" id="CHEBI:75989"/>
        <dbReference type="EC" id="3.5.99.6"/>
    </reaction>
</comment>
<comment type="pathway">
    <text evidence="1">Amino-sugar metabolism; N-acetylneuraminate degradation; D-fructose 6-phosphate from N-acetylneuraminate: step 5/5.</text>
</comment>
<comment type="similarity">
    <text evidence="1">Belongs to the glucosamine/galactosamine-6-phosphate isomerase family. NagB subfamily.</text>
</comment>
<accession>A6M241</accession>
<evidence type="ECO:0000255" key="1">
    <source>
        <dbReference type="HAMAP-Rule" id="MF_01241"/>
    </source>
</evidence>
<proteinExistence type="inferred from homology"/>
<keyword id="KW-0119">Carbohydrate metabolism</keyword>
<keyword id="KW-0378">Hydrolase</keyword>
<protein>
    <recommendedName>
        <fullName evidence="1">Glucosamine-6-phosphate deaminase</fullName>
        <ecNumber evidence="1">3.5.99.6</ecNumber>
    </recommendedName>
    <alternativeName>
        <fullName evidence="1">GlcN6P deaminase</fullName>
        <shortName evidence="1">GNPDA</shortName>
    </alternativeName>
    <alternativeName>
        <fullName evidence="1">Glucosamine-6-phosphate isomerase</fullName>
    </alternativeName>
</protein>